<organism>
    <name type="scientific">Shewanella putrefaciens (strain CN-32 / ATCC BAA-453)</name>
    <dbReference type="NCBI Taxonomy" id="319224"/>
    <lineage>
        <taxon>Bacteria</taxon>
        <taxon>Pseudomonadati</taxon>
        <taxon>Pseudomonadota</taxon>
        <taxon>Gammaproteobacteria</taxon>
        <taxon>Alteromonadales</taxon>
        <taxon>Shewanellaceae</taxon>
        <taxon>Shewanella</taxon>
    </lineage>
</organism>
<name>RLMM_SHEPC</name>
<comment type="function">
    <text evidence="1">Catalyzes the 2'-O-methylation at nucleotide C2498 in 23S rRNA.</text>
</comment>
<comment type="catalytic activity">
    <reaction evidence="1">
        <text>cytidine(2498) in 23S rRNA + S-adenosyl-L-methionine = 2'-O-methylcytidine(2498) in 23S rRNA + S-adenosyl-L-homocysteine + H(+)</text>
        <dbReference type="Rhea" id="RHEA:42788"/>
        <dbReference type="Rhea" id="RHEA-COMP:10244"/>
        <dbReference type="Rhea" id="RHEA-COMP:10245"/>
        <dbReference type="ChEBI" id="CHEBI:15378"/>
        <dbReference type="ChEBI" id="CHEBI:57856"/>
        <dbReference type="ChEBI" id="CHEBI:59789"/>
        <dbReference type="ChEBI" id="CHEBI:74495"/>
        <dbReference type="ChEBI" id="CHEBI:82748"/>
        <dbReference type="EC" id="2.1.1.186"/>
    </reaction>
</comment>
<comment type="subunit">
    <text evidence="1">Monomer.</text>
</comment>
<comment type="subcellular location">
    <subcellularLocation>
        <location evidence="1">Cytoplasm</location>
    </subcellularLocation>
</comment>
<comment type="similarity">
    <text evidence="1">Belongs to the class I-like SAM-binding methyltransferase superfamily. RNA methyltransferase RlmE family. RlmM subfamily.</text>
</comment>
<feature type="chain" id="PRO_0000314539" description="Ribosomal RNA large subunit methyltransferase M">
    <location>
        <begin position="1"/>
        <end position="361"/>
    </location>
</feature>
<feature type="active site" description="Proton acceptor" evidence="1">
    <location>
        <position position="305"/>
    </location>
</feature>
<feature type="binding site" evidence="1">
    <location>
        <position position="187"/>
    </location>
    <ligand>
        <name>S-adenosyl-L-methionine</name>
        <dbReference type="ChEBI" id="CHEBI:59789"/>
    </ligand>
</feature>
<feature type="binding site" evidence="1">
    <location>
        <begin position="220"/>
        <end position="223"/>
    </location>
    <ligand>
        <name>S-adenosyl-L-methionine</name>
        <dbReference type="ChEBI" id="CHEBI:59789"/>
    </ligand>
</feature>
<feature type="binding site" evidence="1">
    <location>
        <position position="239"/>
    </location>
    <ligand>
        <name>S-adenosyl-L-methionine</name>
        <dbReference type="ChEBI" id="CHEBI:59789"/>
    </ligand>
</feature>
<feature type="binding site" evidence="1">
    <location>
        <position position="259"/>
    </location>
    <ligand>
        <name>S-adenosyl-L-methionine</name>
        <dbReference type="ChEBI" id="CHEBI:59789"/>
    </ligand>
</feature>
<feature type="binding site" evidence="1">
    <location>
        <position position="276"/>
    </location>
    <ligand>
        <name>S-adenosyl-L-methionine</name>
        <dbReference type="ChEBI" id="CHEBI:59789"/>
    </ligand>
</feature>
<sequence length="361" mass="40939">MKNLFLFCRAGFEKECAAEIQQRAGELNVGGFVKANNNDAYVVYQCFEEDAADTLVKQLPLDSLIFARQMFAASDLLVDLPESDRISPIVAALSDVSKAGEVRVETPDTNEAKELSAFCRKFTVPLRQHLKKSGSLLAQENPKRPIIHVCFIGPGRAYVGYSYSNNSSPHFMGIPRLKMAADAPSRSSLKLDEAFGQFVPKEEQEERIRSGMNAVDLGACPGGWTYQLVRRGMFVSAVDNGPMDEKLMETGQVKHYREDGFRFEPQRKNIYWLVCDMVEKPARVAELIEAWAINGWFKEAIFNLKLPMKSRYKEVTAILETMQTILKENGVTDFKVQCKHLYHDRDEVTVHLWLRPNTAWN</sequence>
<protein>
    <recommendedName>
        <fullName evidence="1">Ribosomal RNA large subunit methyltransferase M</fullName>
        <ecNumber evidence="1">2.1.1.186</ecNumber>
    </recommendedName>
    <alternativeName>
        <fullName evidence="1">23S rRNA (cytidine2498-2'-O)-methyltransferase</fullName>
    </alternativeName>
    <alternativeName>
        <fullName evidence="1">23S rRNA 2'-O-ribose methyltransferase RlmM</fullName>
    </alternativeName>
</protein>
<dbReference type="EC" id="2.1.1.186" evidence="1"/>
<dbReference type="EMBL" id="CP000681">
    <property type="protein sequence ID" value="ABP75013.1"/>
    <property type="molecule type" value="Genomic_DNA"/>
</dbReference>
<dbReference type="SMR" id="A4Y4Y0"/>
<dbReference type="STRING" id="319224.Sputcn32_1285"/>
<dbReference type="KEGG" id="spc:Sputcn32_1285"/>
<dbReference type="eggNOG" id="COG2933">
    <property type="taxonomic scope" value="Bacteria"/>
</dbReference>
<dbReference type="HOGENOM" id="CLU_043780_0_0_6"/>
<dbReference type="GO" id="GO:0005737">
    <property type="term" value="C:cytoplasm"/>
    <property type="evidence" value="ECO:0007669"/>
    <property type="project" value="UniProtKB-SubCell"/>
</dbReference>
<dbReference type="GO" id="GO:0008757">
    <property type="term" value="F:S-adenosylmethionine-dependent methyltransferase activity"/>
    <property type="evidence" value="ECO:0007669"/>
    <property type="project" value="UniProtKB-UniRule"/>
</dbReference>
<dbReference type="GO" id="GO:0032259">
    <property type="term" value="P:methylation"/>
    <property type="evidence" value="ECO:0007669"/>
    <property type="project" value="UniProtKB-KW"/>
</dbReference>
<dbReference type="GO" id="GO:0006364">
    <property type="term" value="P:rRNA processing"/>
    <property type="evidence" value="ECO:0007669"/>
    <property type="project" value="UniProtKB-UniRule"/>
</dbReference>
<dbReference type="Gene3D" id="3.30.2300.20">
    <property type="match status" value="1"/>
</dbReference>
<dbReference type="Gene3D" id="3.30.70.2810">
    <property type="match status" value="1"/>
</dbReference>
<dbReference type="Gene3D" id="3.40.50.150">
    <property type="entry name" value="Vaccinia Virus protein VP39"/>
    <property type="match status" value="1"/>
</dbReference>
<dbReference type="HAMAP" id="MF_01551">
    <property type="entry name" value="23SrRNA_methyltr_M"/>
    <property type="match status" value="1"/>
</dbReference>
<dbReference type="InterPro" id="IPR040739">
    <property type="entry name" value="RlmM_FDX"/>
</dbReference>
<dbReference type="InterPro" id="IPR048646">
    <property type="entry name" value="RlmM_THUMP-like"/>
</dbReference>
<dbReference type="InterPro" id="IPR002877">
    <property type="entry name" value="RNA_MeTrfase_FtsJ_dom"/>
</dbReference>
<dbReference type="InterPro" id="IPR011224">
    <property type="entry name" value="rRNA_MeTrfase_M"/>
</dbReference>
<dbReference type="InterPro" id="IPR029063">
    <property type="entry name" value="SAM-dependent_MTases_sf"/>
</dbReference>
<dbReference type="NCBIfam" id="NF008734">
    <property type="entry name" value="PRK11760.1"/>
    <property type="match status" value="1"/>
</dbReference>
<dbReference type="PANTHER" id="PTHR37524">
    <property type="entry name" value="RIBOSOMAL RNA LARGE SUBUNIT METHYLTRANSFERASE M"/>
    <property type="match status" value="1"/>
</dbReference>
<dbReference type="PANTHER" id="PTHR37524:SF2">
    <property type="entry name" value="RIBOSOMAL RNA METHYLTRANSFERASE FTSJ DOMAIN-CONTAINING PROTEIN"/>
    <property type="match status" value="1"/>
</dbReference>
<dbReference type="Pfam" id="PF01728">
    <property type="entry name" value="FtsJ"/>
    <property type="match status" value="1"/>
</dbReference>
<dbReference type="Pfam" id="PF18125">
    <property type="entry name" value="RlmM_FDX"/>
    <property type="match status" value="1"/>
</dbReference>
<dbReference type="Pfam" id="PF21239">
    <property type="entry name" value="RLMM_N"/>
    <property type="match status" value="1"/>
</dbReference>
<dbReference type="PIRSF" id="PIRSF028774">
    <property type="entry name" value="UCP028774"/>
    <property type="match status" value="1"/>
</dbReference>
<dbReference type="SUPFAM" id="SSF53335">
    <property type="entry name" value="S-adenosyl-L-methionine-dependent methyltransferases"/>
    <property type="match status" value="1"/>
</dbReference>
<evidence type="ECO:0000255" key="1">
    <source>
        <dbReference type="HAMAP-Rule" id="MF_01551"/>
    </source>
</evidence>
<reference key="1">
    <citation type="submission" date="2007-04" db="EMBL/GenBank/DDBJ databases">
        <title>Complete sequence of Shewanella putrefaciens CN-32.</title>
        <authorList>
            <consortium name="US DOE Joint Genome Institute"/>
            <person name="Copeland A."/>
            <person name="Lucas S."/>
            <person name="Lapidus A."/>
            <person name="Barry K."/>
            <person name="Detter J.C."/>
            <person name="Glavina del Rio T."/>
            <person name="Hammon N."/>
            <person name="Israni S."/>
            <person name="Dalin E."/>
            <person name="Tice H."/>
            <person name="Pitluck S."/>
            <person name="Chain P."/>
            <person name="Malfatti S."/>
            <person name="Shin M."/>
            <person name="Vergez L."/>
            <person name="Schmutz J."/>
            <person name="Larimer F."/>
            <person name="Land M."/>
            <person name="Hauser L."/>
            <person name="Kyrpides N."/>
            <person name="Mikhailova N."/>
            <person name="Romine M.F."/>
            <person name="Fredrickson J."/>
            <person name="Tiedje J."/>
            <person name="Richardson P."/>
        </authorList>
    </citation>
    <scope>NUCLEOTIDE SEQUENCE [LARGE SCALE GENOMIC DNA]</scope>
    <source>
        <strain>CN-32 / ATCC BAA-453</strain>
    </source>
</reference>
<accession>A4Y4Y0</accession>
<gene>
    <name evidence="1" type="primary">rlmM</name>
    <name type="ordered locus">Sputcn32_1285</name>
</gene>
<keyword id="KW-0963">Cytoplasm</keyword>
<keyword id="KW-0489">Methyltransferase</keyword>
<keyword id="KW-0698">rRNA processing</keyword>
<keyword id="KW-0949">S-adenosyl-L-methionine</keyword>
<keyword id="KW-0808">Transferase</keyword>
<proteinExistence type="inferred from homology"/>